<dbReference type="EC" id="4.2.3.5" evidence="1"/>
<dbReference type="EMBL" id="CP001615">
    <property type="protein sequence ID" value="ACQ71912.1"/>
    <property type="molecule type" value="Genomic_DNA"/>
</dbReference>
<dbReference type="RefSeq" id="WP_015881471.1">
    <property type="nucleotide sequence ID" value="NC_012673.1"/>
</dbReference>
<dbReference type="SMR" id="C4L6N3"/>
<dbReference type="STRING" id="360911.EAT1b_2998"/>
<dbReference type="KEGG" id="eat:EAT1b_2998"/>
<dbReference type="eggNOG" id="COG0082">
    <property type="taxonomic scope" value="Bacteria"/>
</dbReference>
<dbReference type="HOGENOM" id="CLU_034547_2_0_9"/>
<dbReference type="OrthoDB" id="9771806at2"/>
<dbReference type="UniPathway" id="UPA00053">
    <property type="reaction ID" value="UER00090"/>
</dbReference>
<dbReference type="Proteomes" id="UP000000716">
    <property type="component" value="Chromosome"/>
</dbReference>
<dbReference type="GO" id="GO:0005829">
    <property type="term" value="C:cytosol"/>
    <property type="evidence" value="ECO:0007669"/>
    <property type="project" value="TreeGrafter"/>
</dbReference>
<dbReference type="GO" id="GO:0004107">
    <property type="term" value="F:chorismate synthase activity"/>
    <property type="evidence" value="ECO:0007669"/>
    <property type="project" value="UniProtKB-UniRule"/>
</dbReference>
<dbReference type="GO" id="GO:0010181">
    <property type="term" value="F:FMN binding"/>
    <property type="evidence" value="ECO:0007669"/>
    <property type="project" value="TreeGrafter"/>
</dbReference>
<dbReference type="GO" id="GO:0008652">
    <property type="term" value="P:amino acid biosynthetic process"/>
    <property type="evidence" value="ECO:0007669"/>
    <property type="project" value="UniProtKB-KW"/>
</dbReference>
<dbReference type="GO" id="GO:0009073">
    <property type="term" value="P:aromatic amino acid family biosynthetic process"/>
    <property type="evidence" value="ECO:0007669"/>
    <property type="project" value="UniProtKB-KW"/>
</dbReference>
<dbReference type="GO" id="GO:0009423">
    <property type="term" value="P:chorismate biosynthetic process"/>
    <property type="evidence" value="ECO:0007669"/>
    <property type="project" value="UniProtKB-UniRule"/>
</dbReference>
<dbReference type="CDD" id="cd07304">
    <property type="entry name" value="Chorismate_synthase"/>
    <property type="match status" value="1"/>
</dbReference>
<dbReference type="FunFam" id="3.60.150.10:FF:000002">
    <property type="entry name" value="Chorismate synthase"/>
    <property type="match status" value="1"/>
</dbReference>
<dbReference type="Gene3D" id="3.60.150.10">
    <property type="entry name" value="Chorismate synthase AroC"/>
    <property type="match status" value="1"/>
</dbReference>
<dbReference type="HAMAP" id="MF_00300">
    <property type="entry name" value="Chorismate_synth"/>
    <property type="match status" value="1"/>
</dbReference>
<dbReference type="InterPro" id="IPR000453">
    <property type="entry name" value="Chorismate_synth"/>
</dbReference>
<dbReference type="InterPro" id="IPR035904">
    <property type="entry name" value="Chorismate_synth_AroC_sf"/>
</dbReference>
<dbReference type="InterPro" id="IPR020541">
    <property type="entry name" value="Chorismate_synthase_CS"/>
</dbReference>
<dbReference type="NCBIfam" id="TIGR00033">
    <property type="entry name" value="aroC"/>
    <property type="match status" value="1"/>
</dbReference>
<dbReference type="NCBIfam" id="NF003793">
    <property type="entry name" value="PRK05382.1"/>
    <property type="match status" value="1"/>
</dbReference>
<dbReference type="PANTHER" id="PTHR21085">
    <property type="entry name" value="CHORISMATE SYNTHASE"/>
    <property type="match status" value="1"/>
</dbReference>
<dbReference type="PANTHER" id="PTHR21085:SF0">
    <property type="entry name" value="CHORISMATE SYNTHASE"/>
    <property type="match status" value="1"/>
</dbReference>
<dbReference type="Pfam" id="PF01264">
    <property type="entry name" value="Chorismate_synt"/>
    <property type="match status" value="1"/>
</dbReference>
<dbReference type="PIRSF" id="PIRSF001456">
    <property type="entry name" value="Chorismate_synth"/>
    <property type="match status" value="1"/>
</dbReference>
<dbReference type="SUPFAM" id="SSF103263">
    <property type="entry name" value="Chorismate synthase, AroC"/>
    <property type="match status" value="1"/>
</dbReference>
<dbReference type="PROSITE" id="PS00787">
    <property type="entry name" value="CHORISMATE_SYNTHASE_1"/>
    <property type="match status" value="1"/>
</dbReference>
<dbReference type="PROSITE" id="PS00788">
    <property type="entry name" value="CHORISMATE_SYNTHASE_2"/>
    <property type="match status" value="1"/>
</dbReference>
<gene>
    <name evidence="1" type="primary">aroC</name>
    <name type="ordered locus">EAT1b_2998</name>
</gene>
<reference key="1">
    <citation type="journal article" date="2011" name="J. Bacteriol.">
        <title>Complete genome sequence of the Thermophilic Bacterium Exiguobacterium sp. AT1b.</title>
        <authorList>
            <person name="Vishnivetskaya T.A."/>
            <person name="Lucas S."/>
            <person name="Copeland A."/>
            <person name="Lapidus A."/>
            <person name="Glavina del Rio T."/>
            <person name="Dalin E."/>
            <person name="Tice H."/>
            <person name="Bruce D.C."/>
            <person name="Goodwin L.A."/>
            <person name="Pitluck S."/>
            <person name="Saunders E."/>
            <person name="Brettin T."/>
            <person name="Detter C."/>
            <person name="Han C."/>
            <person name="Larimer F."/>
            <person name="Land M.L."/>
            <person name="Hauser L.J."/>
            <person name="Kyrpides N.C."/>
            <person name="Ovchinnikova G."/>
            <person name="Kathariou S."/>
            <person name="Ramaley R.F."/>
            <person name="Rodrigues D.F."/>
            <person name="Hendrix C."/>
            <person name="Richardson P."/>
            <person name="Tiedje J.M."/>
        </authorList>
    </citation>
    <scope>NUCLEOTIDE SEQUENCE [LARGE SCALE GENOMIC DNA]</scope>
    <source>
        <strain>ATCC BAA-1283 / AT1b</strain>
    </source>
</reference>
<evidence type="ECO:0000255" key="1">
    <source>
        <dbReference type="HAMAP-Rule" id="MF_00300"/>
    </source>
</evidence>
<comment type="function">
    <text evidence="1">Catalyzes the anti-1,4-elimination of the C-3 phosphate and the C-6 proR hydrogen from 5-enolpyruvylshikimate-3-phosphate (EPSP) to yield chorismate, which is the branch point compound that serves as the starting substrate for the three terminal pathways of aromatic amino acid biosynthesis. This reaction introduces a second double bond into the aromatic ring system.</text>
</comment>
<comment type="catalytic activity">
    <reaction evidence="1">
        <text>5-O-(1-carboxyvinyl)-3-phosphoshikimate = chorismate + phosphate</text>
        <dbReference type="Rhea" id="RHEA:21020"/>
        <dbReference type="ChEBI" id="CHEBI:29748"/>
        <dbReference type="ChEBI" id="CHEBI:43474"/>
        <dbReference type="ChEBI" id="CHEBI:57701"/>
        <dbReference type="EC" id="4.2.3.5"/>
    </reaction>
</comment>
<comment type="cofactor">
    <cofactor evidence="1">
        <name>FMNH2</name>
        <dbReference type="ChEBI" id="CHEBI:57618"/>
    </cofactor>
    <text evidence="1">Reduced FMN (FMNH(2)).</text>
</comment>
<comment type="pathway">
    <text evidence="1">Metabolic intermediate biosynthesis; chorismate biosynthesis; chorismate from D-erythrose 4-phosphate and phosphoenolpyruvate: step 7/7.</text>
</comment>
<comment type="subunit">
    <text evidence="1">Homotetramer.</text>
</comment>
<comment type="similarity">
    <text evidence="1">Belongs to the chorismate synthase family.</text>
</comment>
<accession>C4L6N3</accession>
<feature type="chain" id="PRO_1000204951" description="Chorismate synthase">
    <location>
        <begin position="1"/>
        <end position="387"/>
    </location>
</feature>
<feature type="binding site" evidence="1">
    <location>
        <position position="39"/>
    </location>
    <ligand>
        <name>NADP(+)</name>
        <dbReference type="ChEBI" id="CHEBI:58349"/>
    </ligand>
</feature>
<feature type="binding site" evidence="1">
    <location>
        <position position="45"/>
    </location>
    <ligand>
        <name>NADP(+)</name>
        <dbReference type="ChEBI" id="CHEBI:58349"/>
    </ligand>
</feature>
<feature type="binding site" evidence="1">
    <location>
        <begin position="130"/>
        <end position="132"/>
    </location>
    <ligand>
        <name>FMN</name>
        <dbReference type="ChEBI" id="CHEBI:58210"/>
    </ligand>
</feature>
<feature type="binding site" evidence="1">
    <location>
        <begin position="251"/>
        <end position="252"/>
    </location>
    <ligand>
        <name>FMN</name>
        <dbReference type="ChEBI" id="CHEBI:58210"/>
    </ligand>
</feature>
<feature type="binding site" evidence="1">
    <location>
        <position position="295"/>
    </location>
    <ligand>
        <name>FMN</name>
        <dbReference type="ChEBI" id="CHEBI:58210"/>
    </ligand>
</feature>
<feature type="binding site" evidence="1">
    <location>
        <begin position="310"/>
        <end position="314"/>
    </location>
    <ligand>
        <name>FMN</name>
        <dbReference type="ChEBI" id="CHEBI:58210"/>
    </ligand>
</feature>
<feature type="binding site" evidence="1">
    <location>
        <position position="336"/>
    </location>
    <ligand>
        <name>FMN</name>
        <dbReference type="ChEBI" id="CHEBI:58210"/>
    </ligand>
</feature>
<sequence>MRYLTAGESHGPGLTVIIEGAPAGLAIDISQINAELKKRQSGYGRGRRMQIESDQVEVRSGIRHGVTTGAPITFWIENKDHTHWKHVMQAEPIESDIEVKRRVSRPRPGHADLVGGMKYDHRDLRDVLERSSARETAARVAVGAFCKQLLQQVGVSLFSYVKVIGGERAESRTFDSLQEAQAVVDASPVRTLDEAAALRMMRRIDEAKANGDSIGGIVCTEVHGVVPGLGSYVQYDRKLDAKIAQAVMSVNAFKGVEFGEGFEMAYRPGSEVMDPIAYGDNGYTRLSNHLGGFEGGMTTGMPILCSAVMKPIPTLYKPLQSVDIDTKEAFLAQIERSDSCAVPAASLVVEAVIAFEIAKEMCETFGHDTMERIKHRVDEYREELRVW</sequence>
<keyword id="KW-0028">Amino-acid biosynthesis</keyword>
<keyword id="KW-0057">Aromatic amino acid biosynthesis</keyword>
<keyword id="KW-0274">FAD</keyword>
<keyword id="KW-0285">Flavoprotein</keyword>
<keyword id="KW-0288">FMN</keyword>
<keyword id="KW-0456">Lyase</keyword>
<keyword id="KW-0521">NADP</keyword>
<organism>
    <name type="scientific">Exiguobacterium sp. (strain ATCC BAA-1283 / AT1b)</name>
    <dbReference type="NCBI Taxonomy" id="360911"/>
    <lineage>
        <taxon>Bacteria</taxon>
        <taxon>Bacillati</taxon>
        <taxon>Bacillota</taxon>
        <taxon>Bacilli</taxon>
        <taxon>Bacillales</taxon>
        <taxon>Bacillales Family XII. Incertae Sedis</taxon>
        <taxon>Exiguobacterium</taxon>
    </lineage>
</organism>
<name>AROC_EXISA</name>
<proteinExistence type="inferred from homology"/>
<protein>
    <recommendedName>
        <fullName evidence="1">Chorismate synthase</fullName>
        <shortName evidence="1">CS</shortName>
        <ecNumber evidence="1">4.2.3.5</ecNumber>
    </recommendedName>
    <alternativeName>
        <fullName evidence="1">5-enolpyruvylshikimate-3-phosphate phospholyase</fullName>
    </alternativeName>
</protein>